<name>CYC3_DESDE</name>
<accession>P00134</accession>
<dbReference type="PIR" id="A00127">
    <property type="entry name" value="CCDV3D"/>
</dbReference>
<dbReference type="SMR" id="P00134"/>
<dbReference type="GO" id="GO:0042597">
    <property type="term" value="C:periplasmic space"/>
    <property type="evidence" value="ECO:0007669"/>
    <property type="project" value="UniProtKB-SubCell"/>
</dbReference>
<dbReference type="GO" id="GO:0009055">
    <property type="term" value="F:electron transfer activity"/>
    <property type="evidence" value="ECO:0007669"/>
    <property type="project" value="InterPro"/>
</dbReference>
<dbReference type="GO" id="GO:0020037">
    <property type="term" value="F:heme binding"/>
    <property type="evidence" value="ECO:0007669"/>
    <property type="project" value="InterPro"/>
</dbReference>
<dbReference type="GO" id="GO:0046872">
    <property type="term" value="F:metal ion binding"/>
    <property type="evidence" value="ECO:0007669"/>
    <property type="project" value="UniProtKB-KW"/>
</dbReference>
<dbReference type="GO" id="GO:0009061">
    <property type="term" value="P:anaerobic respiration"/>
    <property type="evidence" value="ECO:0007669"/>
    <property type="project" value="UniProtKB-KW"/>
</dbReference>
<dbReference type="CDD" id="cd08168">
    <property type="entry name" value="Cytochrom_C3"/>
    <property type="match status" value="1"/>
</dbReference>
<dbReference type="Gene3D" id="3.90.10.10">
    <property type="entry name" value="Cytochrome C3"/>
    <property type="match status" value="1"/>
</dbReference>
<dbReference type="InterPro" id="IPR002322">
    <property type="entry name" value="Cyt_c_III"/>
</dbReference>
<dbReference type="InterPro" id="IPR020942">
    <property type="entry name" value="Cyt_c_III_dom"/>
</dbReference>
<dbReference type="InterPro" id="IPR036280">
    <property type="entry name" value="Multihaem_cyt_sf"/>
</dbReference>
<dbReference type="Pfam" id="PF02085">
    <property type="entry name" value="Cytochrom_CIII"/>
    <property type="match status" value="1"/>
</dbReference>
<dbReference type="PRINTS" id="PR00609">
    <property type="entry name" value="CYTOCHROMEC3"/>
</dbReference>
<dbReference type="SUPFAM" id="SSF48695">
    <property type="entry name" value="Multiheme cytochromes"/>
    <property type="match status" value="1"/>
</dbReference>
<dbReference type="PROSITE" id="PS51008">
    <property type="entry name" value="MULTIHEME_CYTC"/>
    <property type="match status" value="1"/>
</dbReference>
<reference key="1">
    <citation type="journal article" date="1971" name="FEBS Lett.">
        <title>The amino acid sequence of cytochrome c-3 from Desulfovibrio desulfuricans (strain El Agheila Z, NCIB 8380).</title>
        <authorList>
            <person name="Ambler R.P."/>
            <person name="Bruschi M."/>
            <person name="le Gall J."/>
        </authorList>
    </citation>
    <scope>PROTEIN SEQUENCE</scope>
    <source>
        <strain>DSM 1926 / NCIMB 8380 / El Agheila Z</strain>
    </source>
</reference>
<comment type="function">
    <text>Participates in sulfate respiration coupled with phosphorylation by transferring electrons from the enzyme dehydrogenase to ferredoxin.</text>
</comment>
<comment type="cofactor">
    <cofactor evidence="1">
        <name>heme</name>
        <dbReference type="ChEBI" id="CHEBI:30413"/>
    </cofactor>
    <text evidence="1">Binds 4 heme c groups covalently per monomer.</text>
</comment>
<comment type="subcellular location">
    <subcellularLocation>
        <location>Periplasm</location>
    </subcellularLocation>
</comment>
<comment type="miscellaneous">
    <text evidence="1">The second heme binding site has an unusual CXXXXCH motif.</text>
</comment>
<keyword id="KW-0903">Direct protein sequencing</keyword>
<keyword id="KW-0249">Electron transport</keyword>
<keyword id="KW-0349">Heme</keyword>
<keyword id="KW-0408">Iron</keyword>
<keyword id="KW-0479">Metal-binding</keyword>
<keyword id="KW-0574">Periplasm</keyword>
<keyword id="KW-0763">Sulfate respiration</keyword>
<keyword id="KW-0813">Transport</keyword>
<protein>
    <recommendedName>
        <fullName>Cytochrome c3</fullName>
    </recommendedName>
</protein>
<organism>
    <name type="scientific">Desulfovibrio desulfuricans</name>
    <dbReference type="NCBI Taxonomy" id="876"/>
    <lineage>
        <taxon>Bacteria</taxon>
        <taxon>Pseudomonadati</taxon>
        <taxon>Thermodesulfobacteriota</taxon>
        <taxon>Desulfovibrionia</taxon>
        <taxon>Desulfovibrionales</taxon>
        <taxon>Desulfovibrionaceae</taxon>
        <taxon>Desulfovibrio</taxon>
    </lineage>
</organism>
<feature type="chain" id="PRO_0000108357" description="Cytochrome c3">
    <location>
        <begin position="1"/>
        <end position="102"/>
    </location>
</feature>
<feature type="binding site" description="axial binding residue" evidence="1">
    <location>
        <position position="26"/>
    </location>
    <ligand>
        <name>heme c</name>
        <dbReference type="ChEBI" id="CHEBI:61717"/>
        <label>1</label>
    </ligand>
    <ligandPart>
        <name>Fe</name>
        <dbReference type="ChEBI" id="CHEBI:18248"/>
    </ligandPart>
</feature>
<feature type="binding site" description="axial binding residue" evidence="1">
    <location>
        <position position="29"/>
    </location>
    <ligand>
        <name>heme c</name>
        <dbReference type="ChEBI" id="CHEBI:61717"/>
        <label>3</label>
    </ligand>
    <ligandPart>
        <name>Fe</name>
        <dbReference type="ChEBI" id="CHEBI:18248"/>
    </ligandPart>
</feature>
<feature type="binding site" description="covalent" evidence="1">
    <location>
        <position position="34"/>
    </location>
    <ligand>
        <name>heme c</name>
        <dbReference type="ChEBI" id="CHEBI:61717"/>
        <label>1</label>
    </ligand>
</feature>
<feature type="binding site" description="covalent" evidence="1">
    <location>
        <position position="37"/>
    </location>
    <ligand>
        <name>heme c</name>
        <dbReference type="ChEBI" id="CHEBI:61717"/>
        <label>1</label>
    </ligand>
</feature>
<feature type="binding site" description="axial binding residue" evidence="1">
    <location>
        <position position="38"/>
    </location>
    <ligand>
        <name>heme c</name>
        <dbReference type="ChEBI" id="CHEBI:61717"/>
        <label>1</label>
    </ligand>
    <ligandPart>
        <name>Fe</name>
        <dbReference type="ChEBI" id="CHEBI:18248"/>
    </ligandPart>
</feature>
<feature type="binding site" description="axial binding residue" evidence="1">
    <location>
        <position position="39"/>
    </location>
    <ligand>
        <name>heme c</name>
        <dbReference type="ChEBI" id="CHEBI:61717"/>
        <label>2</label>
    </ligand>
    <ligandPart>
        <name>Fe</name>
        <dbReference type="ChEBI" id="CHEBI:18248"/>
    </ligandPart>
</feature>
<feature type="binding site" description="covalent" evidence="1">
    <location>
        <position position="50"/>
    </location>
    <ligand>
        <name>heme c</name>
        <dbReference type="ChEBI" id="CHEBI:61717"/>
        <label>2</label>
    </ligand>
</feature>
<feature type="binding site" description="covalent" evidence="1">
    <location>
        <position position="55"/>
    </location>
    <ligand>
        <name>heme c</name>
        <dbReference type="ChEBI" id="CHEBI:61717"/>
        <label>2</label>
    </ligand>
</feature>
<feature type="binding site" description="axial binding residue" evidence="1">
    <location>
        <position position="56"/>
    </location>
    <ligand>
        <name>heme c</name>
        <dbReference type="ChEBI" id="CHEBI:61717"/>
        <label>2</label>
    </ligand>
    <ligandPart>
        <name>Fe</name>
        <dbReference type="ChEBI" id="CHEBI:18248"/>
    </ligandPart>
</feature>
<feature type="binding site" description="axial binding residue" evidence="1">
    <location>
        <position position="73"/>
    </location>
    <ligand>
        <name>heme c</name>
        <dbReference type="ChEBI" id="CHEBI:61717"/>
        <label>4</label>
    </ligand>
    <ligandPart>
        <name>Fe</name>
        <dbReference type="ChEBI" id="CHEBI:18248"/>
    </ligandPart>
</feature>
<feature type="binding site" description="covalent" evidence="1">
    <location>
        <position position="81"/>
    </location>
    <ligand>
        <name>heme c</name>
        <dbReference type="ChEBI" id="CHEBI:61717"/>
        <label>3</label>
    </ligand>
</feature>
<feature type="binding site" description="covalent" evidence="1">
    <location>
        <position position="84"/>
    </location>
    <ligand>
        <name>heme c</name>
        <dbReference type="ChEBI" id="CHEBI:61717"/>
        <label>3</label>
    </ligand>
</feature>
<feature type="binding site" description="axial binding residue" evidence="1">
    <location>
        <position position="85"/>
    </location>
    <ligand>
        <name>heme c</name>
        <dbReference type="ChEBI" id="CHEBI:61717"/>
        <label>3</label>
    </ligand>
    <ligandPart>
        <name>Fe</name>
        <dbReference type="ChEBI" id="CHEBI:18248"/>
    </ligandPart>
</feature>
<feature type="binding site" description="covalent" evidence="1">
    <location>
        <position position="95"/>
    </location>
    <ligand>
        <name>heme c</name>
        <dbReference type="ChEBI" id="CHEBI:61717"/>
        <label>4</label>
    </ligand>
</feature>
<feature type="binding site" description="covalent" evidence="1">
    <location>
        <position position="98"/>
    </location>
    <ligand>
        <name>heme c</name>
        <dbReference type="ChEBI" id="CHEBI:61717"/>
        <label>4</label>
    </ligand>
</feature>
<feature type="binding site" description="axial binding residue" evidence="1">
    <location>
        <position position="99"/>
    </location>
    <ligand>
        <name>heme c</name>
        <dbReference type="ChEBI" id="CHEBI:61717"/>
        <label>4</label>
    </ligand>
    <ligandPart>
        <name>Fe</name>
        <dbReference type="ChEBI" id="CHEBI:18248"/>
    </ligandPart>
</feature>
<sequence>VDAPADMVIKAPAGAKVTKAPVAFSHKGHASMDCKTCHHKWDGAGAIQPCQASGCHANTESKKGDDSFYMAFHERKSEKSCVGCHKSMKKGPTKCTECHPKN</sequence>
<proteinExistence type="evidence at protein level"/>
<evidence type="ECO:0000250" key="1">
    <source>
        <dbReference type="UniProtKB" id="P38554"/>
    </source>
</evidence>